<organism>
    <name type="scientific">Drosophila melanogaster</name>
    <name type="common">Fruit fly</name>
    <dbReference type="NCBI Taxonomy" id="7227"/>
    <lineage>
        <taxon>Eukaryota</taxon>
        <taxon>Metazoa</taxon>
        <taxon>Ecdysozoa</taxon>
        <taxon>Arthropoda</taxon>
        <taxon>Hexapoda</taxon>
        <taxon>Insecta</taxon>
        <taxon>Pterygota</taxon>
        <taxon>Neoptera</taxon>
        <taxon>Endopterygota</taxon>
        <taxon>Diptera</taxon>
        <taxon>Brachycera</taxon>
        <taxon>Muscomorpha</taxon>
        <taxon>Ephydroidea</taxon>
        <taxon>Drosophilidae</taxon>
        <taxon>Drosophila</taxon>
        <taxon>Sophophora</taxon>
    </lineage>
</organism>
<evidence type="ECO:0000250" key="1"/>
<evidence type="ECO:0000250" key="2">
    <source>
        <dbReference type="UniProtKB" id="Q9Y230"/>
    </source>
</evidence>
<evidence type="ECO:0000256" key="3">
    <source>
        <dbReference type="SAM" id="MobiDB-lite"/>
    </source>
</evidence>
<evidence type="ECO:0000269" key="4">
    <source>
    </source>
</evidence>
<evidence type="ECO:0000269" key="5">
    <source>
    </source>
</evidence>
<evidence type="ECO:0000269" key="6">
    <source>
    </source>
</evidence>
<evidence type="ECO:0000269" key="7">
    <source>
    </source>
</evidence>
<evidence type="ECO:0000269" key="8">
    <source>
    </source>
</evidence>
<evidence type="ECO:0000305" key="9"/>
<evidence type="ECO:0000312" key="10">
    <source>
        <dbReference type="EMBL" id="AAF43412.1"/>
    </source>
</evidence>
<evidence type="ECO:0000312" key="11">
    <source>
        <dbReference type="EMBL" id="AAF49182.1"/>
    </source>
</evidence>
<evidence type="ECO:0000312" key="12">
    <source>
        <dbReference type="EMBL" id="AAL28500.1"/>
    </source>
</evidence>
<evidence type="ECO:0000312" key="13">
    <source>
        <dbReference type="FlyBase" id="FBgn0040075"/>
    </source>
</evidence>
<name>RUVB2_DROME</name>
<protein>
    <recommendedName>
        <fullName>RuvB-like helicase 2</fullName>
        <ecNumber>3.6.4.12</ecNumber>
    </recommendedName>
    <alternativeName>
        <fullName>Dreptin</fullName>
        <shortName>Drep</shortName>
    </alternativeName>
    <alternativeName>
        <fullName>Reptin</fullName>
    </alternativeName>
</protein>
<feature type="chain" id="PRO_0000306323" description="RuvB-like helicase 2">
    <location>
        <begin position="1"/>
        <end position="481"/>
    </location>
</feature>
<feature type="region of interest" description="Disordered" evidence="3">
    <location>
        <begin position="453"/>
        <end position="481"/>
    </location>
</feature>
<feature type="binding site" evidence="2">
    <location>
        <begin position="73"/>
        <end position="80"/>
    </location>
    <ligand>
        <name>ATP</name>
        <dbReference type="ChEBI" id="CHEBI:30616"/>
    </ligand>
</feature>
<dbReference type="EC" id="3.6.4.12"/>
<dbReference type="EMBL" id="AF233279">
    <property type="protein sequence ID" value="AAF43412.1"/>
    <property type="molecule type" value="Genomic_DNA"/>
</dbReference>
<dbReference type="EMBL" id="AE014296">
    <property type="protein sequence ID" value="AAF49182.1"/>
    <property type="molecule type" value="Genomic_DNA"/>
</dbReference>
<dbReference type="EMBL" id="AY060952">
    <property type="protein sequence ID" value="AAL28500.1"/>
    <property type="molecule type" value="mRNA"/>
</dbReference>
<dbReference type="EMBL" id="AY061155">
    <property type="protein sequence ID" value="AAL28703.1"/>
    <property type="molecule type" value="mRNA"/>
</dbReference>
<dbReference type="RefSeq" id="NP_001262040.1">
    <property type="nucleotide sequence ID" value="NM_001275111.1"/>
</dbReference>
<dbReference type="RefSeq" id="NP_001287113.1">
    <property type="nucleotide sequence ID" value="NM_001300184.1"/>
</dbReference>
<dbReference type="RefSeq" id="NP_524156.1">
    <property type="nucleotide sequence ID" value="NM_079432.3"/>
</dbReference>
<dbReference type="SMR" id="Q9V3K3"/>
<dbReference type="BioGRID" id="65368">
    <property type="interactions" value="34"/>
</dbReference>
<dbReference type="ComplexPortal" id="CPX-2264">
    <property type="entry name" value="NuA4 histone acetyltransferase complex"/>
</dbReference>
<dbReference type="ComplexPortal" id="CPX-2423">
    <property type="entry name" value="SWR1 chromatin remodelling complex"/>
</dbReference>
<dbReference type="ComplexPortal" id="CPX-2693">
    <property type="entry name" value="INO80 chromatin remodeling complex"/>
</dbReference>
<dbReference type="FunCoup" id="Q9V3K3">
    <property type="interactions" value="2114"/>
</dbReference>
<dbReference type="IntAct" id="Q9V3K3">
    <property type="interactions" value="24"/>
</dbReference>
<dbReference type="STRING" id="7227.FBpp0074756"/>
<dbReference type="PaxDb" id="7227-FBpp0074756"/>
<dbReference type="EnsemblMetazoa" id="FBtr0074988">
    <property type="protein sequence ID" value="FBpp0074756"/>
    <property type="gene ID" value="FBgn0040075"/>
</dbReference>
<dbReference type="EnsemblMetazoa" id="FBtr0331852">
    <property type="protein sequence ID" value="FBpp0304236"/>
    <property type="gene ID" value="FBgn0040075"/>
</dbReference>
<dbReference type="EnsemblMetazoa" id="FBtr0344993">
    <property type="protein sequence ID" value="FBpp0311247"/>
    <property type="gene ID" value="FBgn0040075"/>
</dbReference>
<dbReference type="GeneID" id="40092"/>
<dbReference type="KEGG" id="dme:Dmel_CG9750"/>
<dbReference type="UCSC" id="CG9750-RA">
    <property type="organism name" value="d. melanogaster"/>
</dbReference>
<dbReference type="AGR" id="FB:FBgn0040075"/>
<dbReference type="CTD" id="40092"/>
<dbReference type="FlyBase" id="FBgn0040075">
    <property type="gene designation" value="rept"/>
</dbReference>
<dbReference type="VEuPathDB" id="VectorBase:FBgn0040075"/>
<dbReference type="eggNOG" id="KOG2680">
    <property type="taxonomic scope" value="Eukaryota"/>
</dbReference>
<dbReference type="GeneTree" id="ENSGT00940000153556"/>
<dbReference type="HOGENOM" id="CLU_028311_4_0_1"/>
<dbReference type="InParanoid" id="Q9V3K3"/>
<dbReference type="OMA" id="IINTEPY"/>
<dbReference type="OrthoDB" id="10060499at2759"/>
<dbReference type="PhylomeDB" id="Q9V3K3"/>
<dbReference type="SignaLink" id="Q9V3K3"/>
<dbReference type="BioGRID-ORCS" id="40092">
    <property type="hits" value="1 hit in 1 CRISPR screen"/>
</dbReference>
<dbReference type="GenomeRNAi" id="40092"/>
<dbReference type="PRO" id="PR:Q9V3K3"/>
<dbReference type="Proteomes" id="UP000000803">
    <property type="component" value="Chromosome 3L"/>
</dbReference>
<dbReference type="Bgee" id="FBgn0040075">
    <property type="expression patterns" value="Expressed in wing disc and 95 other cell types or tissues"/>
</dbReference>
<dbReference type="ExpressionAtlas" id="Q9V3K3">
    <property type="expression patterns" value="baseline and differential"/>
</dbReference>
<dbReference type="GO" id="GO:0000123">
    <property type="term" value="C:histone acetyltransferase complex"/>
    <property type="evidence" value="ECO:0000353"/>
    <property type="project" value="FlyBase"/>
</dbReference>
<dbReference type="GO" id="GO:0031011">
    <property type="term" value="C:Ino80 complex"/>
    <property type="evidence" value="ECO:0000314"/>
    <property type="project" value="FlyBase"/>
</dbReference>
<dbReference type="GO" id="GO:0035267">
    <property type="term" value="C:NuA4 histone acetyltransferase complex"/>
    <property type="evidence" value="ECO:0000314"/>
    <property type="project" value="UniProtKB"/>
</dbReference>
<dbReference type="GO" id="GO:0005634">
    <property type="term" value="C:nucleus"/>
    <property type="evidence" value="ECO:0000314"/>
    <property type="project" value="UniProtKB"/>
</dbReference>
<dbReference type="GO" id="GO:0097255">
    <property type="term" value="C:R2TP complex"/>
    <property type="evidence" value="ECO:0000314"/>
    <property type="project" value="FlyBase"/>
</dbReference>
<dbReference type="GO" id="GO:0000812">
    <property type="term" value="C:Swr1 complex"/>
    <property type="evidence" value="ECO:0000318"/>
    <property type="project" value="GO_Central"/>
</dbReference>
<dbReference type="GO" id="GO:0005524">
    <property type="term" value="F:ATP binding"/>
    <property type="evidence" value="ECO:0007669"/>
    <property type="project" value="UniProtKB-KW"/>
</dbReference>
<dbReference type="GO" id="GO:0016887">
    <property type="term" value="F:ATP hydrolysis activity"/>
    <property type="evidence" value="ECO:0007669"/>
    <property type="project" value="InterPro"/>
</dbReference>
<dbReference type="GO" id="GO:0003678">
    <property type="term" value="F:DNA helicase activity"/>
    <property type="evidence" value="ECO:0000318"/>
    <property type="project" value="GO_Central"/>
</dbReference>
<dbReference type="GO" id="GO:0003714">
    <property type="term" value="F:transcription corepressor activity"/>
    <property type="evidence" value="ECO:0000315"/>
    <property type="project" value="UniProtKB"/>
</dbReference>
<dbReference type="GO" id="GO:0048102">
    <property type="term" value="P:autophagic cell death"/>
    <property type="evidence" value="ECO:0000315"/>
    <property type="project" value="FlyBase"/>
</dbReference>
<dbReference type="GO" id="GO:0000492">
    <property type="term" value="P:box C/D snoRNP assembly"/>
    <property type="evidence" value="ECO:0000318"/>
    <property type="project" value="GO_Central"/>
</dbReference>
<dbReference type="GO" id="GO:0006338">
    <property type="term" value="P:chromatin remodeling"/>
    <property type="evidence" value="ECO:0000318"/>
    <property type="project" value="GO_Central"/>
</dbReference>
<dbReference type="GO" id="GO:0006281">
    <property type="term" value="P:DNA repair"/>
    <property type="evidence" value="ECO:0007669"/>
    <property type="project" value="UniProtKB-KW"/>
</dbReference>
<dbReference type="GO" id="GO:0140861">
    <property type="term" value="P:DNA repair-dependent chromatin remodeling"/>
    <property type="evidence" value="ECO:0000314"/>
    <property type="project" value="FlyBase"/>
</dbReference>
<dbReference type="GO" id="GO:0031507">
    <property type="term" value="P:heterochromatin formation"/>
    <property type="evidence" value="ECO:0000315"/>
    <property type="project" value="FlyBase"/>
</dbReference>
<dbReference type="GO" id="GO:0007480">
    <property type="term" value="P:imaginal disc-derived leg morphogenesis"/>
    <property type="evidence" value="ECO:0000315"/>
    <property type="project" value="FlyBase"/>
</dbReference>
<dbReference type="GO" id="GO:0090090">
    <property type="term" value="P:negative regulation of canonical Wnt signaling pathway"/>
    <property type="evidence" value="ECO:0000315"/>
    <property type="project" value="UniProtKB"/>
</dbReference>
<dbReference type="GO" id="GO:0010629">
    <property type="term" value="P:negative regulation of gene expression"/>
    <property type="evidence" value="ECO:0000315"/>
    <property type="project" value="FlyBase"/>
</dbReference>
<dbReference type="GO" id="GO:1901838">
    <property type="term" value="P:positive regulation of transcription of nucleolar large rRNA by RNA polymerase I"/>
    <property type="evidence" value="ECO:0000315"/>
    <property type="project" value="FlyBase"/>
</dbReference>
<dbReference type="GO" id="GO:0042127">
    <property type="term" value="P:regulation of cell population proliferation"/>
    <property type="evidence" value="ECO:0000315"/>
    <property type="project" value="UniProtKB"/>
</dbReference>
<dbReference type="GO" id="GO:0006357">
    <property type="term" value="P:regulation of transcription by RNA polymerase II"/>
    <property type="evidence" value="ECO:0000318"/>
    <property type="project" value="GO_Central"/>
</dbReference>
<dbReference type="GO" id="GO:0035075">
    <property type="term" value="P:response to ecdysone"/>
    <property type="evidence" value="ECO:0000315"/>
    <property type="project" value="FlyBase"/>
</dbReference>
<dbReference type="FunFam" id="3.40.50.300:FF:002221">
    <property type="entry name" value="RuvB-like 2"/>
    <property type="match status" value="2"/>
</dbReference>
<dbReference type="FunFam" id="1.10.8.60:FF:000010">
    <property type="entry name" value="RuvB-like helicase"/>
    <property type="match status" value="1"/>
</dbReference>
<dbReference type="FunFam" id="2.40.50.360:FF:000002">
    <property type="entry name" value="RuvB-like helicase"/>
    <property type="match status" value="1"/>
</dbReference>
<dbReference type="Gene3D" id="1.10.8.60">
    <property type="match status" value="1"/>
</dbReference>
<dbReference type="Gene3D" id="3.40.50.300">
    <property type="entry name" value="P-loop containing nucleotide triphosphate hydrolases"/>
    <property type="match status" value="1"/>
</dbReference>
<dbReference type="Gene3D" id="2.40.50.360">
    <property type="entry name" value="RuvB-like helicase, domain II"/>
    <property type="match status" value="1"/>
</dbReference>
<dbReference type="InterPro" id="IPR003593">
    <property type="entry name" value="AAA+_ATPase"/>
</dbReference>
<dbReference type="InterPro" id="IPR027417">
    <property type="entry name" value="P-loop_NTPase"/>
</dbReference>
<dbReference type="InterPro" id="IPR027238">
    <property type="entry name" value="RuvB-like"/>
</dbReference>
<dbReference type="InterPro" id="IPR041048">
    <property type="entry name" value="RuvB-like_C"/>
</dbReference>
<dbReference type="InterPro" id="IPR042487">
    <property type="entry name" value="RuvBL1/2_DNA/RNA_bd_dom"/>
</dbReference>
<dbReference type="InterPro" id="IPR010339">
    <property type="entry name" value="TIP49_P-loop"/>
</dbReference>
<dbReference type="PANTHER" id="PTHR11093">
    <property type="entry name" value="RUVB-RELATED REPTIN AND PONTIN"/>
    <property type="match status" value="1"/>
</dbReference>
<dbReference type="Pfam" id="PF06068">
    <property type="entry name" value="TIP49"/>
    <property type="match status" value="1"/>
</dbReference>
<dbReference type="Pfam" id="PF17856">
    <property type="entry name" value="TIP49_C"/>
    <property type="match status" value="1"/>
</dbReference>
<dbReference type="SMART" id="SM00382">
    <property type="entry name" value="AAA"/>
    <property type="match status" value="1"/>
</dbReference>
<dbReference type="SUPFAM" id="SSF52540">
    <property type="entry name" value="P-loop containing nucleoside triphosphate hydrolases"/>
    <property type="match status" value="1"/>
</dbReference>
<gene>
    <name evidence="11 13" type="primary">rept</name>
    <name type="ORF">CG9750</name>
</gene>
<accession>Q9V3K3</accession>
<proteinExistence type="evidence at protein level"/>
<sequence>MAETEKIEVRDVTRIERIGAHSHIRGLGLDDVLEARLVSQGMVGQKDARRAAGVVVQMVREGKIAGRCILLAGEPSTGKTAIAVGMAQALGTETPFTSMSGSEIYSLEMSKTEALSQALRKSIGVRIKEETEIIEGEVVEIQIERPASGTGQKVGKVTLKTTEMETNYDLGNKIIECFMKEKIQAGDVITIDKASGKVNKLGRSFTRARDYDATGAQTRFVQCPEGELQKRKEVVHTVTLHEIDVINSRTHGFLALFSGDTGEIKQEVRDQINNKVLEWREEGKAEINPGVLFIDEVHMLDIECFSFLNRALESDMAPVVVMATNRGITRIRGTNYRSPHGIPIDLLDRMIIIRTVPYSEKEVKEILKIRCEEEDCIMHPDALTILTRIATDTSLRYAIQLITTANLVCRRRKATEVNTEDVKKVYSLFLDENRSSKILKEYQDDYMFSEITEEVERDPAAGGGAKRRVEGGGGDAQPMEH</sequence>
<comment type="function">
    <text evidence="5 7">Acts as a transcriptional coactivator in Wg signaling caused by altered arm signaling. Pont and rept interfere antagonistically with nuclear arm signaling function, and are required to enhance or reduce arm activity, respectively. Also an essential cofactor for the normal function of Myc; required for cellular proliferation and growth.</text>
</comment>
<comment type="function">
    <text evidence="1">Proposed core component of the chromatin remodeling Ino80 complex which is involved in transcriptional regulation, DNA replication and probably DNA repair.</text>
</comment>
<comment type="catalytic activity">
    <reaction>
        <text>ATP + H2O = ADP + phosphate + H(+)</text>
        <dbReference type="Rhea" id="RHEA:13065"/>
        <dbReference type="ChEBI" id="CHEBI:15377"/>
        <dbReference type="ChEBI" id="CHEBI:15378"/>
        <dbReference type="ChEBI" id="CHEBI:30616"/>
        <dbReference type="ChEBI" id="CHEBI:43474"/>
        <dbReference type="ChEBI" id="CHEBI:456216"/>
        <dbReference type="EC" id="3.6.4.12"/>
    </reaction>
</comment>
<comment type="subunit">
    <text evidence="1 7 8">Forms homohexameric rings. May form a dodecamer with rept made of two stacked hexameric rings (By similarity). Component of the chromatin remodeling Ino80 complex. Interacts with Myc and pont.</text>
</comment>
<comment type="interaction">
    <interactant intactId="EBI-192924">
        <id>Q9V3K3</id>
    </interactant>
    <interactant intactId="EBI-120162">
        <id>Q9W4S7</id>
        <label>Myc</label>
    </interactant>
    <organismsDiffer>false</organismsDiffer>
    <experiments>4</experiments>
</comment>
<comment type="interaction">
    <interactant intactId="EBI-192924">
        <id>Q9V3K3</id>
    </interactant>
    <interactant intactId="EBI-234957">
        <id>Q9VH07</id>
        <label>pont</label>
    </interactant>
    <organismsDiffer>false</organismsDiffer>
    <experiments>6</experiments>
</comment>
<comment type="subcellular location">
    <subcellularLocation>
        <location evidence="5">Nucleus</location>
    </subcellularLocation>
</comment>
<comment type="tissue specificity">
    <text evidence="5">Higher expression occurs in primordia of mesoderm, anterior and posterior midgut and cephalic furrow early in gastrulation, as well as in endoderm and mesoderm lineages during germ band extension. Later in development expression is only maintained in endoderm cells. Expressed in thoracic and abdominal segment neural precursors of all embryonic chordotonal organs.</text>
</comment>
<comment type="developmental stage">
    <text evidence="5">Expressed both maternally and zygotically.</text>
</comment>
<comment type="disruption phenotype">
    <text evidence="5">Death at first larval instar.</text>
</comment>
<comment type="similarity">
    <text evidence="9">Belongs to the RuvB family.</text>
</comment>
<keyword id="KW-0067">ATP-binding</keyword>
<keyword id="KW-0156">Chromatin regulator</keyword>
<keyword id="KW-0227">DNA damage</keyword>
<keyword id="KW-0234">DNA repair</keyword>
<keyword id="KW-0347">Helicase</keyword>
<keyword id="KW-0378">Hydrolase</keyword>
<keyword id="KW-0547">Nucleotide-binding</keyword>
<keyword id="KW-0539">Nucleus</keyword>
<keyword id="KW-1185">Reference proteome</keyword>
<keyword id="KW-0678">Repressor</keyword>
<keyword id="KW-0804">Transcription</keyword>
<keyword id="KW-0805">Transcription regulation</keyword>
<reference evidence="9 10" key="1">
    <citation type="journal article" date="2000" name="EMBO J.">
        <title>Pontin52 and reptin52 function as antagonistic regulators of beta-catenin signalling activity.</title>
        <authorList>
            <person name="Bauer A."/>
            <person name="Chauvet S."/>
            <person name="Huber O."/>
            <person name="Usseglio F."/>
            <person name="Rothbaecher U."/>
            <person name="Aragnol D."/>
            <person name="Kemler R."/>
            <person name="Pradel J."/>
        </authorList>
    </citation>
    <scope>NUCLEOTIDE SEQUENCE [GENOMIC DNA]</scope>
    <scope>FUNCTION</scope>
    <scope>SUBCELLULAR LOCATION</scope>
    <scope>TISSUE SPECIFICITY</scope>
    <scope>DEVELOPMENTAL STAGE</scope>
    <scope>DISRUPTION PHENOTYPE</scope>
</reference>
<reference evidence="11" key="2">
    <citation type="journal article" date="2000" name="Science">
        <title>The genome sequence of Drosophila melanogaster.</title>
        <authorList>
            <person name="Adams M.D."/>
            <person name="Celniker S.E."/>
            <person name="Holt R.A."/>
            <person name="Evans C.A."/>
            <person name="Gocayne J.D."/>
            <person name="Amanatides P.G."/>
            <person name="Scherer S.E."/>
            <person name="Li P.W."/>
            <person name="Hoskins R.A."/>
            <person name="Galle R.F."/>
            <person name="George R.A."/>
            <person name="Lewis S.E."/>
            <person name="Richards S."/>
            <person name="Ashburner M."/>
            <person name="Henderson S.N."/>
            <person name="Sutton G.G."/>
            <person name="Wortman J.R."/>
            <person name="Yandell M.D."/>
            <person name="Zhang Q."/>
            <person name="Chen L.X."/>
            <person name="Brandon R.C."/>
            <person name="Rogers Y.-H.C."/>
            <person name="Blazej R.G."/>
            <person name="Champe M."/>
            <person name="Pfeiffer B.D."/>
            <person name="Wan K.H."/>
            <person name="Doyle C."/>
            <person name="Baxter E.G."/>
            <person name="Helt G."/>
            <person name="Nelson C.R."/>
            <person name="Miklos G.L.G."/>
            <person name="Abril J.F."/>
            <person name="Agbayani A."/>
            <person name="An H.-J."/>
            <person name="Andrews-Pfannkoch C."/>
            <person name="Baldwin D."/>
            <person name="Ballew R.M."/>
            <person name="Basu A."/>
            <person name="Baxendale J."/>
            <person name="Bayraktaroglu L."/>
            <person name="Beasley E.M."/>
            <person name="Beeson K.Y."/>
            <person name="Benos P.V."/>
            <person name="Berman B.P."/>
            <person name="Bhandari D."/>
            <person name="Bolshakov S."/>
            <person name="Borkova D."/>
            <person name="Botchan M.R."/>
            <person name="Bouck J."/>
            <person name="Brokstein P."/>
            <person name="Brottier P."/>
            <person name="Burtis K.C."/>
            <person name="Busam D.A."/>
            <person name="Butler H."/>
            <person name="Cadieu E."/>
            <person name="Center A."/>
            <person name="Chandra I."/>
            <person name="Cherry J.M."/>
            <person name="Cawley S."/>
            <person name="Dahlke C."/>
            <person name="Davenport L.B."/>
            <person name="Davies P."/>
            <person name="de Pablos B."/>
            <person name="Delcher A."/>
            <person name="Deng Z."/>
            <person name="Mays A.D."/>
            <person name="Dew I."/>
            <person name="Dietz S.M."/>
            <person name="Dodson K."/>
            <person name="Doup L.E."/>
            <person name="Downes M."/>
            <person name="Dugan-Rocha S."/>
            <person name="Dunkov B.C."/>
            <person name="Dunn P."/>
            <person name="Durbin K.J."/>
            <person name="Evangelista C.C."/>
            <person name="Ferraz C."/>
            <person name="Ferriera S."/>
            <person name="Fleischmann W."/>
            <person name="Fosler C."/>
            <person name="Gabrielian A.E."/>
            <person name="Garg N.S."/>
            <person name="Gelbart W.M."/>
            <person name="Glasser K."/>
            <person name="Glodek A."/>
            <person name="Gong F."/>
            <person name="Gorrell J.H."/>
            <person name="Gu Z."/>
            <person name="Guan P."/>
            <person name="Harris M."/>
            <person name="Harris N.L."/>
            <person name="Harvey D.A."/>
            <person name="Heiman T.J."/>
            <person name="Hernandez J.R."/>
            <person name="Houck J."/>
            <person name="Hostin D."/>
            <person name="Houston K.A."/>
            <person name="Howland T.J."/>
            <person name="Wei M.-H."/>
            <person name="Ibegwam C."/>
            <person name="Jalali M."/>
            <person name="Kalush F."/>
            <person name="Karpen G.H."/>
            <person name="Ke Z."/>
            <person name="Kennison J.A."/>
            <person name="Ketchum K.A."/>
            <person name="Kimmel B.E."/>
            <person name="Kodira C.D."/>
            <person name="Kraft C.L."/>
            <person name="Kravitz S."/>
            <person name="Kulp D."/>
            <person name="Lai Z."/>
            <person name="Lasko P."/>
            <person name="Lei Y."/>
            <person name="Levitsky A.A."/>
            <person name="Li J.H."/>
            <person name="Li Z."/>
            <person name="Liang Y."/>
            <person name="Lin X."/>
            <person name="Liu X."/>
            <person name="Mattei B."/>
            <person name="McIntosh T.C."/>
            <person name="McLeod M.P."/>
            <person name="McPherson D."/>
            <person name="Merkulov G."/>
            <person name="Milshina N.V."/>
            <person name="Mobarry C."/>
            <person name="Morris J."/>
            <person name="Moshrefi A."/>
            <person name="Mount S.M."/>
            <person name="Moy M."/>
            <person name="Murphy B."/>
            <person name="Murphy L."/>
            <person name="Muzny D.M."/>
            <person name="Nelson D.L."/>
            <person name="Nelson D.R."/>
            <person name="Nelson K.A."/>
            <person name="Nixon K."/>
            <person name="Nusskern D.R."/>
            <person name="Pacleb J.M."/>
            <person name="Palazzolo M."/>
            <person name="Pittman G.S."/>
            <person name="Pan S."/>
            <person name="Pollard J."/>
            <person name="Puri V."/>
            <person name="Reese M.G."/>
            <person name="Reinert K."/>
            <person name="Remington K."/>
            <person name="Saunders R.D.C."/>
            <person name="Scheeler F."/>
            <person name="Shen H."/>
            <person name="Shue B.C."/>
            <person name="Siden-Kiamos I."/>
            <person name="Simpson M."/>
            <person name="Skupski M.P."/>
            <person name="Smith T.J."/>
            <person name="Spier E."/>
            <person name="Spradling A.C."/>
            <person name="Stapleton M."/>
            <person name="Strong R."/>
            <person name="Sun E."/>
            <person name="Svirskas R."/>
            <person name="Tector C."/>
            <person name="Turner R."/>
            <person name="Venter E."/>
            <person name="Wang A.H."/>
            <person name="Wang X."/>
            <person name="Wang Z.-Y."/>
            <person name="Wassarman D.A."/>
            <person name="Weinstock G.M."/>
            <person name="Weissenbach J."/>
            <person name="Williams S.M."/>
            <person name="Woodage T."/>
            <person name="Worley K.C."/>
            <person name="Wu D."/>
            <person name="Yang S."/>
            <person name="Yao Q.A."/>
            <person name="Ye J."/>
            <person name="Yeh R.-F."/>
            <person name="Zaveri J.S."/>
            <person name="Zhan M."/>
            <person name="Zhang G."/>
            <person name="Zhao Q."/>
            <person name="Zheng L."/>
            <person name="Zheng X.H."/>
            <person name="Zhong F.N."/>
            <person name="Zhong W."/>
            <person name="Zhou X."/>
            <person name="Zhu S.C."/>
            <person name="Zhu X."/>
            <person name="Smith H.O."/>
            <person name="Gibbs R.A."/>
            <person name="Myers E.W."/>
            <person name="Rubin G.M."/>
            <person name="Venter J.C."/>
        </authorList>
    </citation>
    <scope>NUCLEOTIDE SEQUENCE [LARGE SCALE GENOMIC DNA]</scope>
    <source>
        <strain evidence="4">Berkeley</strain>
    </source>
</reference>
<reference evidence="9 11" key="3">
    <citation type="journal article" date="2002" name="Genome Biol.">
        <title>Annotation of the Drosophila melanogaster euchromatic genome: a systematic review.</title>
        <authorList>
            <person name="Misra S."/>
            <person name="Crosby M.A."/>
            <person name="Mungall C.J."/>
            <person name="Matthews B.B."/>
            <person name="Campbell K.S."/>
            <person name="Hradecky P."/>
            <person name="Huang Y."/>
            <person name="Kaminker J.S."/>
            <person name="Millburn G.H."/>
            <person name="Prochnik S.E."/>
            <person name="Smith C.D."/>
            <person name="Tupy J.L."/>
            <person name="Whitfield E.J."/>
            <person name="Bayraktaroglu L."/>
            <person name="Berman B.P."/>
            <person name="Bettencourt B.R."/>
            <person name="Celniker S.E."/>
            <person name="de Grey A.D.N.J."/>
            <person name="Drysdale R.A."/>
            <person name="Harris N.L."/>
            <person name="Richter J."/>
            <person name="Russo S."/>
            <person name="Schroeder A.J."/>
            <person name="Shu S.Q."/>
            <person name="Stapleton M."/>
            <person name="Yamada C."/>
            <person name="Ashburner M."/>
            <person name="Gelbart W.M."/>
            <person name="Rubin G.M."/>
            <person name="Lewis S.E."/>
        </authorList>
    </citation>
    <scope>GENOME REANNOTATION</scope>
    <source>
        <strain>Berkeley</strain>
    </source>
</reference>
<reference evidence="12" key="4">
    <citation type="journal article" date="2002" name="Genome Biol.">
        <title>A Drosophila full-length cDNA resource.</title>
        <authorList>
            <person name="Stapleton M."/>
            <person name="Carlson J.W."/>
            <person name="Brokstein P."/>
            <person name="Yu C."/>
            <person name="Champe M."/>
            <person name="George R.A."/>
            <person name="Guarin H."/>
            <person name="Kronmiller B."/>
            <person name="Pacleb J.M."/>
            <person name="Park S."/>
            <person name="Wan K.H."/>
            <person name="Rubin G.M."/>
            <person name="Celniker S.E."/>
        </authorList>
    </citation>
    <scope>NUCLEOTIDE SEQUENCE [LARGE SCALE MRNA]</scope>
    <source>
        <strain evidence="12">Berkeley</strain>
        <tissue evidence="6">Embryo</tissue>
        <tissue evidence="6">Ovary</tissue>
    </source>
</reference>
<reference evidence="9" key="5">
    <citation type="journal article" date="2005" name="Proc. Natl. Acad. Sci. U.S.A.">
        <title>Myc interacts genetically with Tip48/Reptin and Tip49/Pontin to control growth and proliferation during Drosophila development.</title>
        <authorList>
            <person name="Bellosta P."/>
            <person name="Hulf T."/>
            <person name="Balla Diop S."/>
            <person name="Usseglio F."/>
            <person name="Pradel J."/>
            <person name="Aragnol D."/>
            <person name="Gallant P."/>
        </authorList>
    </citation>
    <scope>FUNCTION</scope>
    <scope>INTERACTION WITH MYC AND PONT</scope>
</reference>
<reference evidence="9" key="6">
    <citation type="journal article" date="2006" name="Genes Dev.">
        <title>A Polycomb group protein complex with sequence-specific DNA-binding and selective methyl-lysine-binding activities.</title>
        <authorList>
            <person name="Klymenko T."/>
            <person name="Papp B."/>
            <person name="Fischle W."/>
            <person name="Koecher T."/>
            <person name="Schelder M."/>
            <person name="Fritsch C."/>
            <person name="Wild B."/>
            <person name="Wilm M."/>
            <person name="Mueller J."/>
        </authorList>
    </citation>
    <scope>IDENTIFICATION IN THE INO80 COMPLEX</scope>
    <source>
        <tissue evidence="8">Embryo</tissue>
    </source>
</reference>